<protein>
    <recommendedName>
        <fullName evidence="1">ATP synthase subunit beta</fullName>
        <ecNumber evidence="1">7.1.2.2</ecNumber>
    </recommendedName>
    <alternativeName>
        <fullName evidence="1">ATP synthase F1 sector subunit beta</fullName>
    </alternativeName>
    <alternativeName>
        <fullName evidence="1">F-ATPase subunit beta</fullName>
    </alternativeName>
</protein>
<comment type="function">
    <text evidence="1">Produces ATP from ADP in the presence of a proton gradient across the membrane. The catalytic sites are hosted primarily by the beta subunits.</text>
</comment>
<comment type="catalytic activity">
    <reaction evidence="1">
        <text>ATP + H2O + 4 H(+)(in) = ADP + phosphate + 5 H(+)(out)</text>
        <dbReference type="Rhea" id="RHEA:57720"/>
        <dbReference type="ChEBI" id="CHEBI:15377"/>
        <dbReference type="ChEBI" id="CHEBI:15378"/>
        <dbReference type="ChEBI" id="CHEBI:30616"/>
        <dbReference type="ChEBI" id="CHEBI:43474"/>
        <dbReference type="ChEBI" id="CHEBI:456216"/>
        <dbReference type="EC" id="7.1.2.2"/>
    </reaction>
</comment>
<comment type="subunit">
    <text evidence="1">F-type ATPases have 2 components, CF(1) - the catalytic core - and CF(0) - the membrane proton channel. CF(1) has five subunits: alpha(3), beta(3), gamma(1), delta(1), epsilon(1). CF(0) has four main subunits: a(1), b(1), b'(1) and c(9-12).</text>
</comment>
<comment type="subcellular location">
    <subcellularLocation>
        <location evidence="1">Cellular thylakoid membrane</location>
        <topology evidence="1">Peripheral membrane protein</topology>
    </subcellularLocation>
</comment>
<comment type="similarity">
    <text evidence="1">Belongs to the ATPase alpha/beta chains family.</text>
</comment>
<comment type="sequence caution" evidence="2">
    <conflict type="erroneous initiation">
        <sequence resource="EMBL-CDS" id="ABM77254"/>
    </conflict>
</comment>
<proteinExistence type="inferred from homology"/>
<dbReference type="EC" id="7.1.2.2" evidence="1"/>
<dbReference type="EMBL" id="CP000554">
    <property type="protein sequence ID" value="ABM77254.1"/>
    <property type="status" value="ALT_INIT"/>
    <property type="molecule type" value="Genomic_DNA"/>
</dbReference>
<dbReference type="RefSeq" id="WP_041374695.1">
    <property type="nucleotide sequence ID" value="NC_008820.1"/>
</dbReference>
<dbReference type="SMR" id="A2C6Z4"/>
<dbReference type="STRING" id="59922.P9303_05021"/>
<dbReference type="KEGG" id="pmf:P9303_05021"/>
<dbReference type="HOGENOM" id="CLU_022398_0_2_3"/>
<dbReference type="BioCyc" id="PMAR59922:G1G80-462-MONOMER"/>
<dbReference type="Proteomes" id="UP000002274">
    <property type="component" value="Chromosome"/>
</dbReference>
<dbReference type="GO" id="GO:0031676">
    <property type="term" value="C:plasma membrane-derived thylakoid membrane"/>
    <property type="evidence" value="ECO:0007669"/>
    <property type="project" value="UniProtKB-SubCell"/>
</dbReference>
<dbReference type="GO" id="GO:0045259">
    <property type="term" value="C:proton-transporting ATP synthase complex"/>
    <property type="evidence" value="ECO:0007669"/>
    <property type="project" value="UniProtKB-KW"/>
</dbReference>
<dbReference type="GO" id="GO:0005524">
    <property type="term" value="F:ATP binding"/>
    <property type="evidence" value="ECO:0007669"/>
    <property type="project" value="UniProtKB-UniRule"/>
</dbReference>
<dbReference type="GO" id="GO:0016887">
    <property type="term" value="F:ATP hydrolysis activity"/>
    <property type="evidence" value="ECO:0007669"/>
    <property type="project" value="InterPro"/>
</dbReference>
<dbReference type="GO" id="GO:0046933">
    <property type="term" value="F:proton-transporting ATP synthase activity, rotational mechanism"/>
    <property type="evidence" value="ECO:0007669"/>
    <property type="project" value="UniProtKB-UniRule"/>
</dbReference>
<dbReference type="CDD" id="cd18110">
    <property type="entry name" value="ATP-synt_F1_beta_C"/>
    <property type="match status" value="1"/>
</dbReference>
<dbReference type="CDD" id="cd18115">
    <property type="entry name" value="ATP-synt_F1_beta_N"/>
    <property type="match status" value="1"/>
</dbReference>
<dbReference type="CDD" id="cd01133">
    <property type="entry name" value="F1-ATPase_beta_CD"/>
    <property type="match status" value="1"/>
</dbReference>
<dbReference type="FunFam" id="1.10.1140.10:FF:000001">
    <property type="entry name" value="ATP synthase subunit beta"/>
    <property type="match status" value="1"/>
</dbReference>
<dbReference type="FunFam" id="3.40.50.300:FF:000004">
    <property type="entry name" value="ATP synthase subunit beta"/>
    <property type="match status" value="1"/>
</dbReference>
<dbReference type="FunFam" id="2.40.10.170:FF:000002">
    <property type="entry name" value="ATP synthase subunit beta, chloroplastic"/>
    <property type="match status" value="1"/>
</dbReference>
<dbReference type="Gene3D" id="2.40.10.170">
    <property type="match status" value="1"/>
</dbReference>
<dbReference type="Gene3D" id="1.10.1140.10">
    <property type="entry name" value="Bovine Mitochondrial F1-atpase, Atp Synthase Beta Chain, Chain D, domain 3"/>
    <property type="match status" value="1"/>
</dbReference>
<dbReference type="Gene3D" id="3.40.50.300">
    <property type="entry name" value="P-loop containing nucleotide triphosphate hydrolases"/>
    <property type="match status" value="1"/>
</dbReference>
<dbReference type="HAMAP" id="MF_01347">
    <property type="entry name" value="ATP_synth_beta_bact"/>
    <property type="match status" value="1"/>
</dbReference>
<dbReference type="InterPro" id="IPR003593">
    <property type="entry name" value="AAA+_ATPase"/>
</dbReference>
<dbReference type="InterPro" id="IPR055190">
    <property type="entry name" value="ATP-synt_VA_C"/>
</dbReference>
<dbReference type="InterPro" id="IPR005722">
    <property type="entry name" value="ATP_synth_F1_bsu"/>
</dbReference>
<dbReference type="InterPro" id="IPR020003">
    <property type="entry name" value="ATPase_a/bsu_AS"/>
</dbReference>
<dbReference type="InterPro" id="IPR050053">
    <property type="entry name" value="ATPase_alpha/beta_chains"/>
</dbReference>
<dbReference type="InterPro" id="IPR004100">
    <property type="entry name" value="ATPase_F1/V1/A1_a/bsu_N"/>
</dbReference>
<dbReference type="InterPro" id="IPR036121">
    <property type="entry name" value="ATPase_F1/V1/A1_a/bsu_N_sf"/>
</dbReference>
<dbReference type="InterPro" id="IPR000194">
    <property type="entry name" value="ATPase_F1/V1/A1_a/bsu_nucl-bd"/>
</dbReference>
<dbReference type="InterPro" id="IPR024034">
    <property type="entry name" value="ATPase_F1/V1_b/a_C"/>
</dbReference>
<dbReference type="InterPro" id="IPR027417">
    <property type="entry name" value="P-loop_NTPase"/>
</dbReference>
<dbReference type="NCBIfam" id="TIGR01039">
    <property type="entry name" value="atpD"/>
    <property type="match status" value="1"/>
</dbReference>
<dbReference type="PANTHER" id="PTHR15184">
    <property type="entry name" value="ATP SYNTHASE"/>
    <property type="match status" value="1"/>
</dbReference>
<dbReference type="PANTHER" id="PTHR15184:SF71">
    <property type="entry name" value="ATP SYNTHASE SUBUNIT BETA, MITOCHONDRIAL"/>
    <property type="match status" value="1"/>
</dbReference>
<dbReference type="Pfam" id="PF00006">
    <property type="entry name" value="ATP-synt_ab"/>
    <property type="match status" value="1"/>
</dbReference>
<dbReference type="Pfam" id="PF02874">
    <property type="entry name" value="ATP-synt_ab_N"/>
    <property type="match status" value="1"/>
</dbReference>
<dbReference type="Pfam" id="PF22919">
    <property type="entry name" value="ATP-synt_VA_C"/>
    <property type="match status" value="1"/>
</dbReference>
<dbReference type="SMART" id="SM00382">
    <property type="entry name" value="AAA"/>
    <property type="match status" value="1"/>
</dbReference>
<dbReference type="SUPFAM" id="SSF47917">
    <property type="entry name" value="C-terminal domain of alpha and beta subunits of F1 ATP synthase"/>
    <property type="match status" value="1"/>
</dbReference>
<dbReference type="SUPFAM" id="SSF50615">
    <property type="entry name" value="N-terminal domain of alpha and beta subunits of F1 ATP synthase"/>
    <property type="match status" value="1"/>
</dbReference>
<dbReference type="SUPFAM" id="SSF52540">
    <property type="entry name" value="P-loop containing nucleoside triphosphate hydrolases"/>
    <property type="match status" value="1"/>
</dbReference>
<dbReference type="PROSITE" id="PS00152">
    <property type="entry name" value="ATPASE_ALPHA_BETA"/>
    <property type="match status" value="1"/>
</dbReference>
<gene>
    <name evidence="1" type="primary">atpD</name>
    <name evidence="1" type="synonym">atpB</name>
    <name type="ordered locus">P9303_05021</name>
</gene>
<organism>
    <name type="scientific">Prochlorococcus marinus (strain MIT 9303)</name>
    <dbReference type="NCBI Taxonomy" id="59922"/>
    <lineage>
        <taxon>Bacteria</taxon>
        <taxon>Bacillati</taxon>
        <taxon>Cyanobacteriota</taxon>
        <taxon>Cyanophyceae</taxon>
        <taxon>Synechococcales</taxon>
        <taxon>Prochlorococcaceae</taxon>
        <taxon>Prochlorococcus</taxon>
    </lineage>
</organism>
<accession>A2C6Z4</accession>
<keyword id="KW-0066">ATP synthesis</keyword>
<keyword id="KW-0067">ATP-binding</keyword>
<keyword id="KW-0139">CF(1)</keyword>
<keyword id="KW-0375">Hydrogen ion transport</keyword>
<keyword id="KW-0406">Ion transport</keyword>
<keyword id="KW-0472">Membrane</keyword>
<keyword id="KW-0547">Nucleotide-binding</keyword>
<keyword id="KW-0793">Thylakoid</keyword>
<keyword id="KW-1278">Translocase</keyword>
<keyword id="KW-0813">Transport</keyword>
<evidence type="ECO:0000255" key="1">
    <source>
        <dbReference type="HAMAP-Rule" id="MF_01347"/>
    </source>
</evidence>
<evidence type="ECO:0000305" key="2"/>
<feature type="chain" id="PRO_0000339572" description="ATP synthase subunit beta">
    <location>
        <begin position="1"/>
        <end position="488"/>
    </location>
</feature>
<feature type="binding site" evidence="1">
    <location>
        <begin position="164"/>
        <end position="171"/>
    </location>
    <ligand>
        <name>ATP</name>
        <dbReference type="ChEBI" id="CHEBI:30616"/>
    </ligand>
</feature>
<name>ATPB_PROM3</name>
<reference key="1">
    <citation type="journal article" date="2007" name="PLoS Genet.">
        <title>Patterns and implications of gene gain and loss in the evolution of Prochlorococcus.</title>
        <authorList>
            <person name="Kettler G.C."/>
            <person name="Martiny A.C."/>
            <person name="Huang K."/>
            <person name="Zucker J."/>
            <person name="Coleman M.L."/>
            <person name="Rodrigue S."/>
            <person name="Chen F."/>
            <person name="Lapidus A."/>
            <person name="Ferriera S."/>
            <person name="Johnson J."/>
            <person name="Steglich C."/>
            <person name="Church G.M."/>
            <person name="Richardson P."/>
            <person name="Chisholm S.W."/>
        </authorList>
    </citation>
    <scope>NUCLEOTIDE SEQUENCE [LARGE SCALE GENOMIC DNA]</scope>
    <source>
        <strain>MIT 9303</strain>
    </source>
</reference>
<sequence length="488" mass="52076">MAAAATATAGTKGVVRQVIGPVLDVEFPAGKLPKILNALRIDGKNPSGQHIAITAEVQQLLGDHRVRAVAMSSTDGLVRGMEALDTGSAISVPVGEATLGRIFNVLGEPVDEQGPVTTDATAPIHRPAPKLTELETKPTVFETGIKVIDLLAPYRQGGKVGLFGGAGVGKTVLIQELINNIAKEHGGVSVFGGVGERTREGNDLYEEFKESGVINSDDLSKSKVALCFGQMNEPPGARMRVGLSALTMAEHFRDVNKQDVLLFIDNIFRFVQAGSEVSALLGRMPSAVGYQPTLGTDVGALQERITSTLEGSITSIQAVYVPADDLTDPAPATTFAHLDATTVLARALAAKGIYPAVDPLDSTSTMLQPSVVGDEHYRTARSVQATLQRYKELQDIIAILGLDELSEDDRRTVDRARKIEKFLSQPFFVAEIFTGMSGKYVKLEETIAGFNMILAGELDHLPEQAFYLVGNIDEVKAKAEKIASEAKG</sequence>